<feature type="chain" id="PRO_1000214845" description="NADH-quinone oxidoreductase subunit H">
    <location>
        <begin position="1"/>
        <end position="339"/>
    </location>
</feature>
<feature type="transmembrane region" description="Helical" evidence="1">
    <location>
        <begin position="9"/>
        <end position="29"/>
    </location>
</feature>
<feature type="transmembrane region" description="Helical" evidence="1">
    <location>
        <begin position="50"/>
        <end position="70"/>
    </location>
</feature>
<feature type="transmembrane region" description="Helical" evidence="1">
    <location>
        <begin position="82"/>
        <end position="102"/>
    </location>
</feature>
<feature type="transmembrane region" description="Helical" evidence="1">
    <location>
        <begin position="115"/>
        <end position="135"/>
    </location>
</feature>
<feature type="transmembrane region" description="Helical" evidence="1">
    <location>
        <begin position="161"/>
        <end position="181"/>
    </location>
</feature>
<feature type="transmembrane region" description="Helical" evidence="1">
    <location>
        <begin position="187"/>
        <end position="207"/>
    </location>
</feature>
<feature type="transmembrane region" description="Helical" evidence="1">
    <location>
        <begin position="235"/>
        <end position="255"/>
    </location>
</feature>
<feature type="transmembrane region" description="Helical" evidence="1">
    <location>
        <begin position="275"/>
        <end position="295"/>
    </location>
</feature>
<feature type="transmembrane region" description="Helical" evidence="1">
    <location>
        <begin position="311"/>
        <end position="331"/>
    </location>
</feature>
<accession>C4K222</accession>
<dbReference type="EC" id="7.1.1.-" evidence="1"/>
<dbReference type="EMBL" id="CP001227">
    <property type="protein sequence ID" value="ACR47620.1"/>
    <property type="molecule type" value="Genomic_DNA"/>
</dbReference>
<dbReference type="RefSeq" id="WP_012736833.1">
    <property type="nucleotide sequence ID" value="NC_012730.1"/>
</dbReference>
<dbReference type="SMR" id="C4K222"/>
<dbReference type="KEGG" id="rpk:RPR_04895"/>
<dbReference type="HOGENOM" id="CLU_015134_0_1_5"/>
<dbReference type="Proteomes" id="UP000005015">
    <property type="component" value="Chromosome"/>
</dbReference>
<dbReference type="GO" id="GO:0005886">
    <property type="term" value="C:plasma membrane"/>
    <property type="evidence" value="ECO:0007669"/>
    <property type="project" value="UniProtKB-SubCell"/>
</dbReference>
<dbReference type="GO" id="GO:0003954">
    <property type="term" value="F:NADH dehydrogenase activity"/>
    <property type="evidence" value="ECO:0007669"/>
    <property type="project" value="TreeGrafter"/>
</dbReference>
<dbReference type="GO" id="GO:0016655">
    <property type="term" value="F:oxidoreductase activity, acting on NAD(P)H, quinone or similar compound as acceptor"/>
    <property type="evidence" value="ECO:0007669"/>
    <property type="project" value="UniProtKB-UniRule"/>
</dbReference>
<dbReference type="GO" id="GO:0048038">
    <property type="term" value="F:quinone binding"/>
    <property type="evidence" value="ECO:0007669"/>
    <property type="project" value="UniProtKB-KW"/>
</dbReference>
<dbReference type="GO" id="GO:0009060">
    <property type="term" value="P:aerobic respiration"/>
    <property type="evidence" value="ECO:0007669"/>
    <property type="project" value="TreeGrafter"/>
</dbReference>
<dbReference type="HAMAP" id="MF_01350">
    <property type="entry name" value="NDH1_NuoH"/>
    <property type="match status" value="1"/>
</dbReference>
<dbReference type="InterPro" id="IPR001694">
    <property type="entry name" value="NADH_UbQ_OxRdtase_su1/FPO"/>
</dbReference>
<dbReference type="InterPro" id="IPR018086">
    <property type="entry name" value="NADH_UbQ_OxRdtase_su1_CS"/>
</dbReference>
<dbReference type="NCBIfam" id="NF004741">
    <property type="entry name" value="PRK06076.1-2"/>
    <property type="match status" value="1"/>
</dbReference>
<dbReference type="NCBIfam" id="NF004745">
    <property type="entry name" value="PRK06076.1-6"/>
    <property type="match status" value="1"/>
</dbReference>
<dbReference type="PANTHER" id="PTHR11432">
    <property type="entry name" value="NADH DEHYDROGENASE SUBUNIT 1"/>
    <property type="match status" value="1"/>
</dbReference>
<dbReference type="PANTHER" id="PTHR11432:SF3">
    <property type="entry name" value="NADH-UBIQUINONE OXIDOREDUCTASE CHAIN 1"/>
    <property type="match status" value="1"/>
</dbReference>
<dbReference type="Pfam" id="PF00146">
    <property type="entry name" value="NADHdh"/>
    <property type="match status" value="1"/>
</dbReference>
<dbReference type="PROSITE" id="PS00667">
    <property type="entry name" value="COMPLEX1_ND1_1"/>
    <property type="match status" value="1"/>
</dbReference>
<dbReference type="PROSITE" id="PS00668">
    <property type="entry name" value="COMPLEX1_ND1_2"/>
    <property type="match status" value="1"/>
</dbReference>
<organism>
    <name type="scientific">Rickettsia peacockii (strain Rustic)</name>
    <dbReference type="NCBI Taxonomy" id="562019"/>
    <lineage>
        <taxon>Bacteria</taxon>
        <taxon>Pseudomonadati</taxon>
        <taxon>Pseudomonadota</taxon>
        <taxon>Alphaproteobacteria</taxon>
        <taxon>Rickettsiales</taxon>
        <taxon>Rickettsiaceae</taxon>
        <taxon>Rickettsieae</taxon>
        <taxon>Rickettsia</taxon>
        <taxon>spotted fever group</taxon>
    </lineage>
</organism>
<proteinExistence type="inferred from homology"/>
<evidence type="ECO:0000255" key="1">
    <source>
        <dbReference type="HAMAP-Rule" id="MF_01350"/>
    </source>
</evidence>
<comment type="function">
    <text evidence="1">NDH-1 shuttles electrons from NADH, via FMN and iron-sulfur (Fe-S) centers, to quinones in the respiratory chain. The immediate electron acceptor for the enzyme in this species is believed to be ubiquinone. Couples the redox reaction to proton translocation (for every two electrons transferred, four hydrogen ions are translocated across the cytoplasmic membrane), and thus conserves the redox energy in a proton gradient. This subunit may bind ubiquinone.</text>
</comment>
<comment type="catalytic activity">
    <reaction evidence="1">
        <text>a quinone + NADH + 5 H(+)(in) = a quinol + NAD(+) + 4 H(+)(out)</text>
        <dbReference type="Rhea" id="RHEA:57888"/>
        <dbReference type="ChEBI" id="CHEBI:15378"/>
        <dbReference type="ChEBI" id="CHEBI:24646"/>
        <dbReference type="ChEBI" id="CHEBI:57540"/>
        <dbReference type="ChEBI" id="CHEBI:57945"/>
        <dbReference type="ChEBI" id="CHEBI:132124"/>
    </reaction>
</comment>
<comment type="subunit">
    <text evidence="1">NDH-1 is composed of 14 different subunits. Subunits NuoA, H, J, K, L, M, N constitute the membrane sector of the complex.</text>
</comment>
<comment type="subcellular location">
    <subcellularLocation>
        <location evidence="1">Cell inner membrane</location>
        <topology evidence="1">Multi-pass membrane protein</topology>
    </subcellularLocation>
</comment>
<comment type="similarity">
    <text evidence="1">Belongs to the complex I subunit 1 family.</text>
</comment>
<reference key="1">
    <citation type="journal article" date="2009" name="PLoS ONE">
        <title>Genome sequence of the endosymbiont Rickettsia peacockii and comparison with virulent Rickettsia rickettsii: identification of virulence factors.</title>
        <authorList>
            <person name="Felsheim R.F."/>
            <person name="Kurtti T.J."/>
            <person name="Munderloh U.G."/>
        </authorList>
    </citation>
    <scope>NUCLEOTIDE SEQUENCE [LARGE SCALE GENOMIC DNA]</scope>
    <source>
        <strain>Rustic</strain>
    </source>
</reference>
<name>NUOH_RICPU</name>
<sequence length="339" mass="38076">MLELFFEYIFPLIIIALKVVAITTPLILCVAYLTYAERRVIGLMQLRRGPNVVGPFGLLQPIADAVKLLFKEPIIPTNSDKILFILAPMITFILSLIGWAVIPFAKGVVLADINVGVLYILAISSLSVYGIIIAGWASNSKYAFLGAIRSSAQMISYEVSMGLVIITVLLTTGTLNLSEIIEAQRTMPWWIDLMLLPMGVVFFISVLAETNRLPFDLPEAESELVAGYNVEYSSMGFALFFLGEYANMILVSAMTTTFFLGGYLPPFNISWLDCIPGFFWFVFKVGFLLFCFLWIRATLPRYRYDQLMRLGWKVFLPLTLFWVVLVSSVLVYTDNLPSI</sequence>
<keyword id="KW-0997">Cell inner membrane</keyword>
<keyword id="KW-1003">Cell membrane</keyword>
<keyword id="KW-0472">Membrane</keyword>
<keyword id="KW-0520">NAD</keyword>
<keyword id="KW-0874">Quinone</keyword>
<keyword id="KW-1278">Translocase</keyword>
<keyword id="KW-0812">Transmembrane</keyword>
<keyword id="KW-1133">Transmembrane helix</keyword>
<keyword id="KW-0830">Ubiquinone</keyword>
<protein>
    <recommendedName>
        <fullName evidence="1">NADH-quinone oxidoreductase subunit H</fullName>
        <ecNumber evidence="1">7.1.1.-</ecNumber>
    </recommendedName>
    <alternativeName>
        <fullName evidence="1">NADH dehydrogenase I subunit H</fullName>
    </alternativeName>
    <alternativeName>
        <fullName evidence="1">NDH-1 subunit H</fullName>
    </alternativeName>
</protein>
<gene>
    <name evidence="1" type="primary">nuoH</name>
    <name type="ordered locus">RPR_04895</name>
</gene>